<proteinExistence type="inferred from homology"/>
<accession>A7H2S9</accession>
<reference key="1">
    <citation type="submission" date="2007-07" db="EMBL/GenBank/DDBJ databases">
        <title>Complete genome sequence of Campylobacter jejuni subsp doylei 269.97 isolated from human blood.</title>
        <authorList>
            <person name="Fouts D.E."/>
            <person name="Mongodin E.F."/>
            <person name="Puiu D."/>
            <person name="Sebastian Y."/>
            <person name="Miller W.G."/>
            <person name="Mandrell R.E."/>
            <person name="Lastovica A.J."/>
            <person name="Nelson K.E."/>
        </authorList>
    </citation>
    <scope>NUCLEOTIDE SEQUENCE [LARGE SCALE GENOMIC DNA]</scope>
    <source>
        <strain>ATCC BAA-1458 / RM4099 / 269.97</strain>
    </source>
</reference>
<gene>
    <name evidence="1" type="primary">fliW</name>
    <name type="ordered locus">JJD26997_0648</name>
</gene>
<name>FLIW_CAMJD</name>
<sequence>MTLAVKCPILGFEETKNMEFSTIDEVFVRLKSLDGKDFSFVLINPYLIRPDYEFDIPTYYQELLSLTPESNMKIFNIVAIAKSIEESTVNFLAPVVINLDNNTMAQVILDTVNYPDFFQADQIANYIKK</sequence>
<feature type="chain" id="PRO_1000065811" description="Flagellar assembly factor FliW">
    <location>
        <begin position="1"/>
        <end position="129"/>
    </location>
</feature>
<organism>
    <name type="scientific">Campylobacter jejuni subsp. doylei (strain ATCC BAA-1458 / RM4099 / 269.97)</name>
    <dbReference type="NCBI Taxonomy" id="360109"/>
    <lineage>
        <taxon>Bacteria</taxon>
        <taxon>Pseudomonadati</taxon>
        <taxon>Campylobacterota</taxon>
        <taxon>Epsilonproteobacteria</taxon>
        <taxon>Campylobacterales</taxon>
        <taxon>Campylobacteraceae</taxon>
        <taxon>Campylobacter</taxon>
    </lineage>
</organism>
<keyword id="KW-1005">Bacterial flagellum biogenesis</keyword>
<keyword id="KW-0143">Chaperone</keyword>
<keyword id="KW-0963">Cytoplasm</keyword>
<keyword id="KW-0810">Translation regulation</keyword>
<evidence type="ECO:0000255" key="1">
    <source>
        <dbReference type="HAMAP-Rule" id="MF_01185"/>
    </source>
</evidence>
<protein>
    <recommendedName>
        <fullName evidence="1">Flagellar assembly factor FliW</fullName>
    </recommendedName>
</protein>
<dbReference type="EMBL" id="CP000768">
    <property type="protein sequence ID" value="ABS44679.1"/>
    <property type="molecule type" value="Genomic_DNA"/>
</dbReference>
<dbReference type="SMR" id="A7H2S9"/>
<dbReference type="KEGG" id="cjd:JJD26997_0648"/>
<dbReference type="HOGENOM" id="CLU_112356_2_0_7"/>
<dbReference type="Proteomes" id="UP000002302">
    <property type="component" value="Chromosome"/>
</dbReference>
<dbReference type="GO" id="GO:0005737">
    <property type="term" value="C:cytoplasm"/>
    <property type="evidence" value="ECO:0007669"/>
    <property type="project" value="UniProtKB-SubCell"/>
</dbReference>
<dbReference type="GO" id="GO:0044780">
    <property type="term" value="P:bacterial-type flagellum assembly"/>
    <property type="evidence" value="ECO:0007669"/>
    <property type="project" value="UniProtKB-UniRule"/>
</dbReference>
<dbReference type="GO" id="GO:0006417">
    <property type="term" value="P:regulation of translation"/>
    <property type="evidence" value="ECO:0007669"/>
    <property type="project" value="UniProtKB-KW"/>
</dbReference>
<dbReference type="Gene3D" id="2.30.290.10">
    <property type="entry name" value="BH3618-like"/>
    <property type="match status" value="1"/>
</dbReference>
<dbReference type="HAMAP" id="MF_01185">
    <property type="entry name" value="FliW"/>
    <property type="match status" value="1"/>
</dbReference>
<dbReference type="InterPro" id="IPR003775">
    <property type="entry name" value="Flagellar_assembly_factor_FliW"/>
</dbReference>
<dbReference type="InterPro" id="IPR024046">
    <property type="entry name" value="Flagellar_assmbl_FliW_dom_sf"/>
</dbReference>
<dbReference type="NCBIfam" id="NF009790">
    <property type="entry name" value="PRK13282.1"/>
    <property type="match status" value="1"/>
</dbReference>
<dbReference type="PANTHER" id="PTHR39190">
    <property type="entry name" value="FLAGELLAR ASSEMBLY FACTOR FLIW"/>
    <property type="match status" value="1"/>
</dbReference>
<dbReference type="PANTHER" id="PTHR39190:SF1">
    <property type="entry name" value="FLAGELLAR ASSEMBLY FACTOR FLIW"/>
    <property type="match status" value="1"/>
</dbReference>
<dbReference type="Pfam" id="PF02623">
    <property type="entry name" value="FliW"/>
    <property type="match status" value="1"/>
</dbReference>
<dbReference type="SUPFAM" id="SSF141457">
    <property type="entry name" value="BH3618-like"/>
    <property type="match status" value="1"/>
</dbReference>
<comment type="function">
    <text evidence="1">Acts as an anti-CsrA protein, binds CsrA and prevents it from repressing translation of its target genes, one of which is flagellin. Binds to flagellin and participates in the assembly of the flagellum.</text>
</comment>
<comment type="subunit">
    <text evidence="1">Interacts with translational regulator CsrA and flagellin(s).</text>
</comment>
<comment type="subcellular location">
    <subcellularLocation>
        <location evidence="1">Cytoplasm</location>
    </subcellularLocation>
</comment>
<comment type="similarity">
    <text evidence="1">Belongs to the FliW family.</text>
</comment>